<comment type="function">
    <text evidence="2">Hypertrehalosaemic factors are neuropeptides that elevate the level of trehalose in the hemolymph (trehalose is the major carbohydrate in the hemolymph of insects).</text>
</comment>
<comment type="subcellular location">
    <subcellularLocation>
        <location evidence="2">Secreted</location>
    </subcellularLocation>
</comment>
<comment type="similarity">
    <text evidence="3">Belongs to the AKH/HRTH/RPCH family.</text>
</comment>
<protein>
    <recommendedName>
        <fullName>Hypertrehalosaemic factor 2</fullName>
    </recommendedName>
    <alternativeName>
        <fullName>Hypertrehalosaemic factor II</fullName>
    </alternativeName>
    <alternativeName>
        <fullName>Neuropeptide M-II</fullName>
    </alternativeName>
    <alternativeName>
        <fullName>PeA-CAH-II</fullName>
    </alternativeName>
    <alternativeName>
        <fullName>Periplanetin CC-2</fullName>
    </alternativeName>
</protein>
<sequence>QLTFTPNW</sequence>
<organism>
    <name type="scientific">Periplaneta americana</name>
    <name type="common">American cockroach</name>
    <name type="synonym">Blatta americana</name>
    <dbReference type="NCBI Taxonomy" id="6978"/>
    <lineage>
        <taxon>Eukaryota</taxon>
        <taxon>Metazoa</taxon>
        <taxon>Ecdysozoa</taxon>
        <taxon>Arthropoda</taxon>
        <taxon>Hexapoda</taxon>
        <taxon>Insecta</taxon>
        <taxon>Pterygota</taxon>
        <taxon>Neoptera</taxon>
        <taxon>Polyneoptera</taxon>
        <taxon>Dictyoptera</taxon>
        <taxon>Blattodea</taxon>
        <taxon>Blattoidea</taxon>
        <taxon>Blattidae</taxon>
        <taxon>Blattinae</taxon>
        <taxon>Periplaneta</taxon>
    </lineage>
</organism>
<keyword id="KW-0027">Amidation</keyword>
<keyword id="KW-0903">Direct protein sequencing</keyword>
<keyword id="KW-0372">Hormone</keyword>
<keyword id="KW-0527">Neuropeptide</keyword>
<keyword id="KW-0873">Pyrrolidone carboxylic acid</keyword>
<keyword id="KW-0964">Secreted</keyword>
<reference key="1">
    <citation type="journal article" date="1984" name="Biochem. Biophys. Res. Commun.">
        <title>Structures of two cockroach neuropeptides assigned by fast atom bombardment mass spectrometry.</title>
        <authorList>
            <person name="Witten J.L."/>
            <person name="Schaffer M.H."/>
            <person name="O'Shea M."/>
            <person name="Cook J.C."/>
            <person name="Hemling M.E."/>
            <person name="Rinehart K.L. Jr."/>
        </authorList>
    </citation>
    <scope>PROTEIN SEQUENCE</scope>
    <scope>PYROGLUTAMATE FORMATION AT GLN-1</scope>
    <scope>AMIDATION AT TRP-8</scope>
</reference>
<reference key="2">
    <citation type="journal article" date="1984" name="Proc. Natl. Acad. Sci. U.S.A.">
        <title>Isolation and primary structure of two peptides with cardioacceleratory and hyperglycemic activity from the corpora cardiaca of Periplaneta americana.</title>
        <authorList>
            <person name="Scarborough R.M."/>
            <person name="Jamieson G.C."/>
            <person name="Kalish F."/>
            <person name="Kramer S.J."/>
            <person name="McEnroe G.A."/>
            <person name="Miller C.A."/>
            <person name="Schooley D.A."/>
        </authorList>
    </citation>
    <scope>PROTEIN SEQUENCE</scope>
    <scope>FUNCTION</scope>
    <scope>SUBCELLULAR LOCATION</scope>
    <source>
        <tissue>Corpora cardiaca</tissue>
    </source>
</reference>
<feature type="peptide" id="PRO_0000043438" description="Hypertrehalosaemic factor 2">
    <location>
        <begin position="1"/>
        <end position="8"/>
    </location>
</feature>
<feature type="modified residue" description="Pyrrolidone carboxylic acid" evidence="1">
    <location>
        <position position="1"/>
    </location>
</feature>
<feature type="modified residue" description="Tryptophan amide" evidence="2">
    <location>
        <position position="8"/>
    </location>
</feature>
<accession>P84256</accession>
<accession>P04549</accession>
<proteinExistence type="evidence at protein level"/>
<evidence type="ECO:0000269" key="1">
    <source>
    </source>
</evidence>
<evidence type="ECO:0000269" key="2">
    <source>
    </source>
</evidence>
<evidence type="ECO:0000305" key="3"/>
<name>HTF2_PERAM</name>
<dbReference type="PIR" id="B49823">
    <property type="entry name" value="B49823"/>
</dbReference>
<dbReference type="GO" id="GO:0005576">
    <property type="term" value="C:extracellular region"/>
    <property type="evidence" value="ECO:0007669"/>
    <property type="project" value="UniProtKB-SubCell"/>
</dbReference>
<dbReference type="GO" id="GO:0005179">
    <property type="term" value="F:hormone activity"/>
    <property type="evidence" value="ECO:0007669"/>
    <property type="project" value="UniProtKB-KW"/>
</dbReference>
<dbReference type="GO" id="GO:0007218">
    <property type="term" value="P:neuropeptide signaling pathway"/>
    <property type="evidence" value="ECO:0007669"/>
    <property type="project" value="UniProtKB-KW"/>
</dbReference>
<dbReference type="InterPro" id="IPR002047">
    <property type="entry name" value="Adipokinetic_hormone_CS"/>
</dbReference>
<dbReference type="PROSITE" id="PS00256">
    <property type="entry name" value="AKH"/>
    <property type="match status" value="1"/>
</dbReference>